<organism>
    <name type="scientific">Aethionema cordifolium</name>
    <name type="common">Lebanon stonecress</name>
    <dbReference type="NCBI Taxonomy" id="434059"/>
    <lineage>
        <taxon>Eukaryota</taxon>
        <taxon>Viridiplantae</taxon>
        <taxon>Streptophyta</taxon>
        <taxon>Embryophyta</taxon>
        <taxon>Tracheophyta</taxon>
        <taxon>Spermatophyta</taxon>
        <taxon>Magnoliopsida</taxon>
        <taxon>eudicotyledons</taxon>
        <taxon>Gunneridae</taxon>
        <taxon>Pentapetalae</taxon>
        <taxon>rosids</taxon>
        <taxon>malvids</taxon>
        <taxon>Brassicales</taxon>
        <taxon>Brassicaceae</taxon>
        <taxon>Aethionemeae</taxon>
        <taxon>Aethionema</taxon>
    </lineage>
</organism>
<sequence>MNRPVTRKDLMIVNIGPHHPSMHGVLRLIVTLDGGDVVDCEPILGYLHRGMEKIAENRAIIQYLPYVTRWDYLATMFTEAITVNGPEQLGNIQVPKRASYIRVIMLELSRIASHLLWLGPFMADIGAQTPFFYIFREREFVYDLFEAATGMRMMHNFFRIGGIAADLPYGWIDKCLDFCDYFLTEVVEYQKLITRNPIFLERVEGVGILGGEEAINWGLSGPMLRASGIQWDLRKVDRYECYDEFEWEIQWQKQGDSLARYLVRLSEMTESIKIIQQALEGLPGGPYENLERRGFDRKMNSEMNSEMNSEWNNFDYRFISKKPSPTFELSKQELYVRVEAPKGELGIFLIGDQSGFPWRWKIRPPGFINLQILPELVKRMKLADIMTILGSIDIIMGEVDR</sequence>
<name>NDHH_AETCO</name>
<dbReference type="EC" id="7.1.1.-" evidence="1"/>
<dbReference type="EMBL" id="AP009366">
    <property type="protein sequence ID" value="BAF49827.1"/>
    <property type="molecule type" value="Genomic_DNA"/>
</dbReference>
<dbReference type="RefSeq" id="YP_001123002.1">
    <property type="nucleotide sequence ID" value="NC_009265.1"/>
</dbReference>
<dbReference type="SMR" id="A4QJH2"/>
<dbReference type="GeneID" id="4968584"/>
<dbReference type="GO" id="GO:0009535">
    <property type="term" value="C:chloroplast thylakoid membrane"/>
    <property type="evidence" value="ECO:0007669"/>
    <property type="project" value="UniProtKB-SubCell"/>
</dbReference>
<dbReference type="GO" id="GO:0051287">
    <property type="term" value="F:NAD binding"/>
    <property type="evidence" value="ECO:0007669"/>
    <property type="project" value="InterPro"/>
</dbReference>
<dbReference type="GO" id="GO:0016655">
    <property type="term" value="F:oxidoreductase activity, acting on NAD(P)H, quinone or similar compound as acceptor"/>
    <property type="evidence" value="ECO:0007669"/>
    <property type="project" value="UniProtKB-UniRule"/>
</dbReference>
<dbReference type="GO" id="GO:0048038">
    <property type="term" value="F:quinone binding"/>
    <property type="evidence" value="ECO:0007669"/>
    <property type="project" value="UniProtKB-KW"/>
</dbReference>
<dbReference type="GO" id="GO:0019684">
    <property type="term" value="P:photosynthesis, light reaction"/>
    <property type="evidence" value="ECO:0007669"/>
    <property type="project" value="UniProtKB-UniRule"/>
</dbReference>
<dbReference type="Gene3D" id="1.10.645.10">
    <property type="entry name" value="Cytochrome-c3 Hydrogenase, chain B"/>
    <property type="match status" value="1"/>
</dbReference>
<dbReference type="HAMAP" id="MF_01358">
    <property type="entry name" value="NDH1_NuoD"/>
    <property type="match status" value="1"/>
</dbReference>
<dbReference type="InterPro" id="IPR001135">
    <property type="entry name" value="NADH_Q_OxRdtase_suD"/>
</dbReference>
<dbReference type="InterPro" id="IPR014029">
    <property type="entry name" value="NADH_UbQ_OxRdtase_49kDa_CS"/>
</dbReference>
<dbReference type="InterPro" id="IPR022885">
    <property type="entry name" value="NDH1_su_D/H"/>
</dbReference>
<dbReference type="InterPro" id="IPR029014">
    <property type="entry name" value="NiFe-Hase_large"/>
</dbReference>
<dbReference type="NCBIfam" id="NF004739">
    <property type="entry name" value="PRK06075.1"/>
    <property type="match status" value="1"/>
</dbReference>
<dbReference type="NCBIfam" id="NF005649">
    <property type="entry name" value="PRK07415.1"/>
    <property type="match status" value="1"/>
</dbReference>
<dbReference type="PANTHER" id="PTHR11993:SF10">
    <property type="entry name" value="NADH DEHYDROGENASE [UBIQUINONE] IRON-SULFUR PROTEIN 2, MITOCHONDRIAL"/>
    <property type="match status" value="1"/>
</dbReference>
<dbReference type="PANTHER" id="PTHR11993">
    <property type="entry name" value="NADH-UBIQUINONE OXIDOREDUCTASE 49 KDA SUBUNIT"/>
    <property type="match status" value="1"/>
</dbReference>
<dbReference type="Pfam" id="PF00346">
    <property type="entry name" value="Complex1_49kDa"/>
    <property type="match status" value="1"/>
</dbReference>
<dbReference type="SUPFAM" id="SSF56762">
    <property type="entry name" value="HydB/Nqo4-like"/>
    <property type="match status" value="1"/>
</dbReference>
<dbReference type="PROSITE" id="PS00535">
    <property type="entry name" value="COMPLEX1_49K"/>
    <property type="match status" value="1"/>
</dbReference>
<proteinExistence type="inferred from homology"/>
<gene>
    <name evidence="1" type="primary">ndhH</name>
</gene>
<keyword id="KW-0150">Chloroplast</keyword>
<keyword id="KW-0472">Membrane</keyword>
<keyword id="KW-0520">NAD</keyword>
<keyword id="KW-0521">NADP</keyword>
<keyword id="KW-0934">Plastid</keyword>
<keyword id="KW-0618">Plastoquinone</keyword>
<keyword id="KW-0874">Quinone</keyword>
<keyword id="KW-0793">Thylakoid</keyword>
<keyword id="KW-1278">Translocase</keyword>
<keyword id="KW-0813">Transport</keyword>
<feature type="chain" id="PRO_0000357960" description="NAD(P)H-quinone oxidoreductase subunit H, chloroplastic">
    <location>
        <begin position="1"/>
        <end position="401"/>
    </location>
</feature>
<evidence type="ECO:0000255" key="1">
    <source>
        <dbReference type="HAMAP-Rule" id="MF_01358"/>
    </source>
</evidence>
<comment type="function">
    <text evidence="1">NDH shuttles electrons from NAD(P)H:plastoquinone, via FMN and iron-sulfur (Fe-S) centers, to quinones in the photosynthetic chain and possibly in a chloroplast respiratory chain. The immediate electron acceptor for the enzyme in this species is believed to be plastoquinone. Couples the redox reaction to proton translocation, and thus conserves the redox energy in a proton gradient.</text>
</comment>
<comment type="catalytic activity">
    <reaction evidence="1">
        <text>a plastoquinone + NADH + (n+1) H(+)(in) = a plastoquinol + NAD(+) + n H(+)(out)</text>
        <dbReference type="Rhea" id="RHEA:42608"/>
        <dbReference type="Rhea" id="RHEA-COMP:9561"/>
        <dbReference type="Rhea" id="RHEA-COMP:9562"/>
        <dbReference type="ChEBI" id="CHEBI:15378"/>
        <dbReference type="ChEBI" id="CHEBI:17757"/>
        <dbReference type="ChEBI" id="CHEBI:57540"/>
        <dbReference type="ChEBI" id="CHEBI:57945"/>
        <dbReference type="ChEBI" id="CHEBI:62192"/>
    </reaction>
</comment>
<comment type="catalytic activity">
    <reaction evidence="1">
        <text>a plastoquinone + NADPH + (n+1) H(+)(in) = a plastoquinol + NADP(+) + n H(+)(out)</text>
        <dbReference type="Rhea" id="RHEA:42612"/>
        <dbReference type="Rhea" id="RHEA-COMP:9561"/>
        <dbReference type="Rhea" id="RHEA-COMP:9562"/>
        <dbReference type="ChEBI" id="CHEBI:15378"/>
        <dbReference type="ChEBI" id="CHEBI:17757"/>
        <dbReference type="ChEBI" id="CHEBI:57783"/>
        <dbReference type="ChEBI" id="CHEBI:58349"/>
        <dbReference type="ChEBI" id="CHEBI:62192"/>
    </reaction>
</comment>
<comment type="subunit">
    <text evidence="1">NDH is composed of at least 16 different subunits, 5 of which are encoded in the nucleus.</text>
</comment>
<comment type="subcellular location">
    <subcellularLocation>
        <location evidence="1">Plastid</location>
        <location evidence="1">Chloroplast thylakoid membrane</location>
        <topology evidence="1">Peripheral membrane protein</topology>
        <orientation evidence="1">Stromal side</orientation>
    </subcellularLocation>
</comment>
<comment type="similarity">
    <text evidence="1">Belongs to the complex I 49 kDa subunit family.</text>
</comment>
<geneLocation type="chloroplast"/>
<protein>
    <recommendedName>
        <fullName evidence="1">NAD(P)H-quinone oxidoreductase subunit H, chloroplastic</fullName>
        <ecNumber evidence="1">7.1.1.-</ecNumber>
    </recommendedName>
    <alternativeName>
        <fullName>NAD(P)H dehydrogenase subunit H</fullName>
    </alternativeName>
    <alternativeName>
        <fullName evidence="1">NADH-plastoquinone oxidoreductase 49 kDa subunit</fullName>
    </alternativeName>
    <alternativeName>
        <fullName evidence="1">NADH-plastoquinone oxidoreductase subunit H</fullName>
    </alternativeName>
</protein>
<accession>A4QJH2</accession>
<reference key="1">
    <citation type="submission" date="2007-03" db="EMBL/GenBank/DDBJ databases">
        <title>Sequencing analysis of Aethionema coridifolium chloroplast DNA.</title>
        <authorList>
            <person name="Hosouchi T."/>
            <person name="Tsuruoka H."/>
            <person name="Kotani H."/>
        </authorList>
    </citation>
    <scope>NUCLEOTIDE SEQUENCE [LARGE SCALE GENOMIC DNA]</scope>
</reference>